<keyword id="KW-0030">Aminoacyl-tRNA synthetase</keyword>
<keyword id="KW-0067">ATP-binding</keyword>
<keyword id="KW-0963">Cytoplasm</keyword>
<keyword id="KW-0436">Ligase</keyword>
<keyword id="KW-0479">Metal-binding</keyword>
<keyword id="KW-0547">Nucleotide-binding</keyword>
<keyword id="KW-0648">Protein biosynthesis</keyword>
<keyword id="KW-0694">RNA-binding</keyword>
<keyword id="KW-0820">tRNA-binding</keyword>
<keyword id="KW-0862">Zinc</keyword>
<protein>
    <recommendedName>
        <fullName evidence="1">Threonine--tRNA ligase</fullName>
        <ecNumber evidence="1">6.1.1.3</ecNumber>
    </recommendedName>
    <alternativeName>
        <fullName evidence="1">Threonyl-tRNA synthetase</fullName>
        <shortName evidence="1">ThrRS</shortName>
    </alternativeName>
</protein>
<evidence type="ECO:0000255" key="1">
    <source>
        <dbReference type="HAMAP-Rule" id="MF_00184"/>
    </source>
</evidence>
<gene>
    <name evidence="1" type="primary">thrS</name>
    <name type="ordered locus">syc1504_d</name>
</gene>
<accession>Q5N1X6</accession>
<sequence length="607" mass="69076">MPLMVQSAPSTEAIQLPKTSESAQLKRIRHTMSHVMAMAVQKLFPKAQVTIGPWTETGFYYDFDTPEPFTEADLKAIKKEMVKIIQQKLPVVREEVSREEAQQRIEALGEPYKLEILQGLTEPITLYHLGDRWWDLCAGPHVETTAELNPKAFDLESVAGAYWRGDETKAQLQRIYGTAWETPEQLTEYKRRKEEALKRDHRKLGRELGLFLFADPVGPGLPLWTPKGTILRSTLEDFLKQEQMKRGYQSVVTPHLARVDLFKVSGHWQNYREDMFPMMAEDDEARGLEQGFVLKPMNCPFHIQIYKNELRSYRELPIRLAEFGTVYRYEQSGELGGLTRVRGFTVDDSHLFVRPDQLASEFLSVVDLILSVFKALNLKKFKARLSFRDPESDKYIGSDDVWEKAESAIQAAAETLGMDYFIGVGEAAFYGPKLDFIFQDALDREWQLGTVQVDYNLPERFDLEYVAEDGSRQRPVMIHRAPFGSLERLIGILIEEYAGDFPLWLAPEQIRLLPVTETVLDYCQQVADQLRAIGVRVQVDCSGDRLGKLIRNAEKAKIPVMAVIGAQEAESETLSIRTRATGDLGSLTVADLTKRLSSAIAEKLPHL</sequence>
<comment type="function">
    <text evidence="1">Catalyzes the attachment of threonine to tRNA(Thr) in a two-step reaction: L-threonine is first activated by ATP to form Thr-AMP and then transferred to the acceptor end of tRNA(Thr). Also edits incorrectly charged L-seryl-tRNA(Thr).</text>
</comment>
<comment type="catalytic activity">
    <reaction evidence="1">
        <text>tRNA(Thr) + L-threonine + ATP = L-threonyl-tRNA(Thr) + AMP + diphosphate + H(+)</text>
        <dbReference type="Rhea" id="RHEA:24624"/>
        <dbReference type="Rhea" id="RHEA-COMP:9670"/>
        <dbReference type="Rhea" id="RHEA-COMP:9704"/>
        <dbReference type="ChEBI" id="CHEBI:15378"/>
        <dbReference type="ChEBI" id="CHEBI:30616"/>
        <dbReference type="ChEBI" id="CHEBI:33019"/>
        <dbReference type="ChEBI" id="CHEBI:57926"/>
        <dbReference type="ChEBI" id="CHEBI:78442"/>
        <dbReference type="ChEBI" id="CHEBI:78534"/>
        <dbReference type="ChEBI" id="CHEBI:456215"/>
        <dbReference type="EC" id="6.1.1.3"/>
    </reaction>
</comment>
<comment type="cofactor">
    <cofactor evidence="1">
        <name>Zn(2+)</name>
        <dbReference type="ChEBI" id="CHEBI:29105"/>
    </cofactor>
    <text evidence="1">Binds 1 zinc ion per subunit.</text>
</comment>
<comment type="subunit">
    <text evidence="1">Homodimer.</text>
</comment>
<comment type="subcellular location">
    <subcellularLocation>
        <location evidence="1">Cytoplasm</location>
    </subcellularLocation>
</comment>
<comment type="similarity">
    <text evidence="1">Belongs to the class-II aminoacyl-tRNA synthetase family.</text>
</comment>
<proteinExistence type="inferred from homology"/>
<reference key="1">
    <citation type="journal article" date="2007" name="Photosyn. Res.">
        <title>Complete nucleotide sequence of the freshwater unicellular cyanobacterium Synechococcus elongatus PCC 6301 chromosome: gene content and organization.</title>
        <authorList>
            <person name="Sugita C."/>
            <person name="Ogata K."/>
            <person name="Shikata M."/>
            <person name="Jikuya H."/>
            <person name="Takano J."/>
            <person name="Furumichi M."/>
            <person name="Kanehisa M."/>
            <person name="Omata T."/>
            <person name="Sugiura M."/>
            <person name="Sugita M."/>
        </authorList>
    </citation>
    <scope>NUCLEOTIDE SEQUENCE [LARGE SCALE GENOMIC DNA]</scope>
    <source>
        <strain>ATCC 27144 / PCC 6301 / SAUG 1402/1</strain>
    </source>
</reference>
<feature type="chain" id="PRO_0000101070" description="Threonine--tRNA ligase">
    <location>
        <begin position="1"/>
        <end position="607"/>
    </location>
</feature>
<feature type="region of interest" description="Catalytic" evidence="1">
    <location>
        <begin position="200"/>
        <end position="502"/>
    </location>
</feature>
<feature type="binding site" evidence="1">
    <location>
        <position position="299"/>
    </location>
    <ligand>
        <name>Zn(2+)</name>
        <dbReference type="ChEBI" id="CHEBI:29105"/>
    </ligand>
</feature>
<feature type="binding site" evidence="1">
    <location>
        <position position="350"/>
    </location>
    <ligand>
        <name>Zn(2+)</name>
        <dbReference type="ChEBI" id="CHEBI:29105"/>
    </ligand>
</feature>
<feature type="binding site" evidence="1">
    <location>
        <position position="479"/>
    </location>
    <ligand>
        <name>Zn(2+)</name>
        <dbReference type="ChEBI" id="CHEBI:29105"/>
    </ligand>
</feature>
<dbReference type="EC" id="6.1.1.3" evidence="1"/>
<dbReference type="EMBL" id="AP008231">
    <property type="protein sequence ID" value="BAD79694.1"/>
    <property type="molecule type" value="Genomic_DNA"/>
</dbReference>
<dbReference type="SMR" id="Q5N1X6"/>
<dbReference type="KEGG" id="syc:syc1504_d"/>
<dbReference type="eggNOG" id="COG0441">
    <property type="taxonomic scope" value="Bacteria"/>
</dbReference>
<dbReference type="Proteomes" id="UP000001175">
    <property type="component" value="Chromosome"/>
</dbReference>
<dbReference type="GO" id="GO:0005737">
    <property type="term" value="C:cytoplasm"/>
    <property type="evidence" value="ECO:0007669"/>
    <property type="project" value="UniProtKB-SubCell"/>
</dbReference>
<dbReference type="GO" id="GO:0005524">
    <property type="term" value="F:ATP binding"/>
    <property type="evidence" value="ECO:0007669"/>
    <property type="project" value="UniProtKB-UniRule"/>
</dbReference>
<dbReference type="GO" id="GO:0046872">
    <property type="term" value="F:metal ion binding"/>
    <property type="evidence" value="ECO:0007669"/>
    <property type="project" value="UniProtKB-KW"/>
</dbReference>
<dbReference type="GO" id="GO:0004829">
    <property type="term" value="F:threonine-tRNA ligase activity"/>
    <property type="evidence" value="ECO:0007669"/>
    <property type="project" value="UniProtKB-UniRule"/>
</dbReference>
<dbReference type="GO" id="GO:0000049">
    <property type="term" value="F:tRNA binding"/>
    <property type="evidence" value="ECO:0007669"/>
    <property type="project" value="UniProtKB-KW"/>
</dbReference>
<dbReference type="GO" id="GO:0006435">
    <property type="term" value="P:threonyl-tRNA aminoacylation"/>
    <property type="evidence" value="ECO:0007669"/>
    <property type="project" value="UniProtKB-UniRule"/>
</dbReference>
<dbReference type="CDD" id="cd00860">
    <property type="entry name" value="ThrRS_anticodon"/>
    <property type="match status" value="1"/>
</dbReference>
<dbReference type="CDD" id="cd00771">
    <property type="entry name" value="ThrRS_core"/>
    <property type="match status" value="1"/>
</dbReference>
<dbReference type="FunFam" id="3.30.54.20:FF:000002">
    <property type="entry name" value="Threonine--tRNA ligase"/>
    <property type="match status" value="1"/>
</dbReference>
<dbReference type="FunFam" id="3.30.930.10:FF:000002">
    <property type="entry name" value="Threonine--tRNA ligase"/>
    <property type="match status" value="1"/>
</dbReference>
<dbReference type="FunFam" id="3.40.50.800:FF:000001">
    <property type="entry name" value="Threonine--tRNA ligase"/>
    <property type="match status" value="1"/>
</dbReference>
<dbReference type="Gene3D" id="3.30.54.20">
    <property type="match status" value="1"/>
</dbReference>
<dbReference type="Gene3D" id="3.40.50.800">
    <property type="entry name" value="Anticodon-binding domain"/>
    <property type="match status" value="1"/>
</dbReference>
<dbReference type="Gene3D" id="3.30.930.10">
    <property type="entry name" value="Bira Bifunctional Protein, Domain 2"/>
    <property type="match status" value="1"/>
</dbReference>
<dbReference type="Gene3D" id="3.30.980.10">
    <property type="entry name" value="Threonyl-trna Synthetase, Chain A, domain 2"/>
    <property type="match status" value="1"/>
</dbReference>
<dbReference type="HAMAP" id="MF_00184">
    <property type="entry name" value="Thr_tRNA_synth"/>
    <property type="match status" value="1"/>
</dbReference>
<dbReference type="InterPro" id="IPR002314">
    <property type="entry name" value="aa-tRNA-synt_IIb"/>
</dbReference>
<dbReference type="InterPro" id="IPR006195">
    <property type="entry name" value="aa-tRNA-synth_II"/>
</dbReference>
<dbReference type="InterPro" id="IPR045864">
    <property type="entry name" value="aa-tRNA-synth_II/BPL/LPL"/>
</dbReference>
<dbReference type="InterPro" id="IPR004154">
    <property type="entry name" value="Anticodon-bd"/>
</dbReference>
<dbReference type="InterPro" id="IPR036621">
    <property type="entry name" value="Anticodon-bd_dom_sf"/>
</dbReference>
<dbReference type="InterPro" id="IPR002320">
    <property type="entry name" value="Thr-tRNA-ligase_IIa"/>
</dbReference>
<dbReference type="InterPro" id="IPR018163">
    <property type="entry name" value="Thr/Ala-tRNA-synth_IIc_edit"/>
</dbReference>
<dbReference type="InterPro" id="IPR047246">
    <property type="entry name" value="ThrRS_anticodon"/>
</dbReference>
<dbReference type="InterPro" id="IPR033728">
    <property type="entry name" value="ThrRS_core"/>
</dbReference>
<dbReference type="InterPro" id="IPR012947">
    <property type="entry name" value="tRNA_SAD"/>
</dbReference>
<dbReference type="NCBIfam" id="TIGR00418">
    <property type="entry name" value="thrS"/>
    <property type="match status" value="1"/>
</dbReference>
<dbReference type="PANTHER" id="PTHR11451:SF44">
    <property type="entry name" value="THREONINE--TRNA LIGASE, CHLOROPLASTIC_MITOCHONDRIAL 2"/>
    <property type="match status" value="1"/>
</dbReference>
<dbReference type="PANTHER" id="PTHR11451">
    <property type="entry name" value="THREONINE-TRNA LIGASE"/>
    <property type="match status" value="1"/>
</dbReference>
<dbReference type="Pfam" id="PF03129">
    <property type="entry name" value="HGTP_anticodon"/>
    <property type="match status" value="1"/>
</dbReference>
<dbReference type="Pfam" id="PF00587">
    <property type="entry name" value="tRNA-synt_2b"/>
    <property type="match status" value="1"/>
</dbReference>
<dbReference type="Pfam" id="PF07973">
    <property type="entry name" value="tRNA_SAD"/>
    <property type="match status" value="1"/>
</dbReference>
<dbReference type="PRINTS" id="PR01047">
    <property type="entry name" value="TRNASYNTHTHR"/>
</dbReference>
<dbReference type="SMART" id="SM00863">
    <property type="entry name" value="tRNA_SAD"/>
    <property type="match status" value="1"/>
</dbReference>
<dbReference type="SUPFAM" id="SSF52954">
    <property type="entry name" value="Class II aaRS ABD-related"/>
    <property type="match status" value="1"/>
</dbReference>
<dbReference type="SUPFAM" id="SSF55681">
    <property type="entry name" value="Class II aaRS and biotin synthetases"/>
    <property type="match status" value="1"/>
</dbReference>
<dbReference type="SUPFAM" id="SSF55186">
    <property type="entry name" value="ThrRS/AlaRS common domain"/>
    <property type="match status" value="1"/>
</dbReference>
<dbReference type="PROSITE" id="PS50862">
    <property type="entry name" value="AA_TRNA_LIGASE_II"/>
    <property type="match status" value="1"/>
</dbReference>
<organism>
    <name type="scientific">Synechococcus sp. (strain ATCC 27144 / PCC 6301 / SAUG 1402/1)</name>
    <name type="common">Anacystis nidulans</name>
    <dbReference type="NCBI Taxonomy" id="269084"/>
    <lineage>
        <taxon>Bacteria</taxon>
        <taxon>Bacillati</taxon>
        <taxon>Cyanobacteriota</taxon>
        <taxon>Cyanophyceae</taxon>
        <taxon>Synechococcales</taxon>
        <taxon>Synechococcaceae</taxon>
        <taxon>Synechococcus</taxon>
    </lineage>
</organism>
<name>SYT_SYNP6</name>